<protein>
    <recommendedName>
        <fullName evidence="3">Olfactory receptor 5P80</fullName>
    </recommendedName>
    <alternativeName>
        <fullName>Olfactory receptor 204-6</fullName>
    </alternativeName>
    <alternativeName>
        <fullName>Olfactory receptor 508</fullName>
    </alternativeName>
</protein>
<dbReference type="EMBL" id="AY073321">
    <property type="protein sequence ID" value="AAL60984.1"/>
    <property type="molecule type" value="Genomic_DNA"/>
</dbReference>
<dbReference type="EMBL" id="AY317616">
    <property type="protein sequence ID" value="AAP71006.1"/>
    <property type="molecule type" value="Genomic_DNA"/>
</dbReference>
<dbReference type="CCDS" id="CCDS21722.1"/>
<dbReference type="RefSeq" id="NP_666984.1">
    <property type="nucleotide sequence ID" value="NM_146773.1"/>
</dbReference>
<dbReference type="SMR" id="Q8VG42"/>
<dbReference type="FunCoup" id="Q8VG42">
    <property type="interactions" value="1182"/>
</dbReference>
<dbReference type="STRING" id="10090.ENSMUSP00000072686"/>
<dbReference type="GlyCosmos" id="Q8VG42">
    <property type="glycosylation" value="2 sites, No reported glycans"/>
</dbReference>
<dbReference type="GlyGen" id="Q8VG42">
    <property type="glycosylation" value="2 sites"/>
</dbReference>
<dbReference type="PaxDb" id="10090-ENSMUSP00000072686"/>
<dbReference type="Ensembl" id="ENSMUST00000072914.3">
    <property type="protein sequence ID" value="ENSMUSP00000072686.2"/>
    <property type="gene ID" value="ENSMUSG00000063764.3"/>
</dbReference>
<dbReference type="GeneID" id="258769"/>
<dbReference type="KEGG" id="mmu:258769"/>
<dbReference type="UCSC" id="uc009jcr.1">
    <property type="organism name" value="mouse"/>
</dbReference>
<dbReference type="AGR" id="MGI:3030342"/>
<dbReference type="CTD" id="258769"/>
<dbReference type="MGI" id="MGI:3030342">
    <property type="gene designation" value="Or5p80"/>
</dbReference>
<dbReference type="VEuPathDB" id="HostDB:ENSMUSG00000063764"/>
<dbReference type="eggNOG" id="ENOG502SKA1">
    <property type="taxonomic scope" value="Eukaryota"/>
</dbReference>
<dbReference type="GeneTree" id="ENSGT01130000278279"/>
<dbReference type="HOGENOM" id="CLU_012526_1_0_1"/>
<dbReference type="InParanoid" id="Q8VG42"/>
<dbReference type="OMA" id="LACSHDF"/>
<dbReference type="OrthoDB" id="9873506at2759"/>
<dbReference type="PhylomeDB" id="Q8VG42"/>
<dbReference type="TreeFam" id="TF338848"/>
<dbReference type="Reactome" id="R-MMU-381753">
    <property type="pathway name" value="Olfactory Signaling Pathway"/>
</dbReference>
<dbReference type="BioGRID-ORCS" id="258769">
    <property type="hits" value="5 hits in 71 CRISPR screens"/>
</dbReference>
<dbReference type="PRO" id="PR:Q8VG42"/>
<dbReference type="Proteomes" id="UP000000589">
    <property type="component" value="Chromosome 7"/>
</dbReference>
<dbReference type="RNAct" id="Q8VG42">
    <property type="molecule type" value="protein"/>
</dbReference>
<dbReference type="GO" id="GO:0016020">
    <property type="term" value="C:membrane"/>
    <property type="evidence" value="ECO:0000247"/>
    <property type="project" value="MGI"/>
</dbReference>
<dbReference type="GO" id="GO:0005886">
    <property type="term" value="C:plasma membrane"/>
    <property type="evidence" value="ECO:0007669"/>
    <property type="project" value="UniProtKB-SubCell"/>
</dbReference>
<dbReference type="GO" id="GO:0004930">
    <property type="term" value="F:G protein-coupled receptor activity"/>
    <property type="evidence" value="ECO:0007669"/>
    <property type="project" value="UniProtKB-KW"/>
</dbReference>
<dbReference type="GO" id="GO:0004984">
    <property type="term" value="F:olfactory receptor activity"/>
    <property type="evidence" value="ECO:0000247"/>
    <property type="project" value="MGI"/>
</dbReference>
<dbReference type="GO" id="GO:0007186">
    <property type="term" value="P:G protein-coupled receptor signaling pathway"/>
    <property type="evidence" value="ECO:0000247"/>
    <property type="project" value="MGI"/>
</dbReference>
<dbReference type="GO" id="GO:0007608">
    <property type="term" value="P:sensory perception of smell"/>
    <property type="evidence" value="ECO:0000247"/>
    <property type="project" value="MGI"/>
</dbReference>
<dbReference type="CDD" id="cd15416">
    <property type="entry name" value="7tmA_OR5P-like"/>
    <property type="match status" value="1"/>
</dbReference>
<dbReference type="FunFam" id="1.20.1070.10:FF:000004">
    <property type="entry name" value="Olfactory receptor"/>
    <property type="match status" value="1"/>
</dbReference>
<dbReference type="Gene3D" id="1.20.1070.10">
    <property type="entry name" value="Rhodopsin 7-helix transmembrane proteins"/>
    <property type="match status" value="1"/>
</dbReference>
<dbReference type="InterPro" id="IPR000276">
    <property type="entry name" value="GPCR_Rhodpsn"/>
</dbReference>
<dbReference type="InterPro" id="IPR017452">
    <property type="entry name" value="GPCR_Rhodpsn_7TM"/>
</dbReference>
<dbReference type="InterPro" id="IPR000725">
    <property type="entry name" value="Olfact_rcpt"/>
</dbReference>
<dbReference type="PANTHER" id="PTHR48018">
    <property type="entry name" value="OLFACTORY RECEPTOR"/>
    <property type="match status" value="1"/>
</dbReference>
<dbReference type="Pfam" id="PF13853">
    <property type="entry name" value="7tm_4"/>
    <property type="match status" value="1"/>
</dbReference>
<dbReference type="PRINTS" id="PR00237">
    <property type="entry name" value="GPCRRHODOPSN"/>
</dbReference>
<dbReference type="PRINTS" id="PR00245">
    <property type="entry name" value="OLFACTORYR"/>
</dbReference>
<dbReference type="SUPFAM" id="SSF81321">
    <property type="entry name" value="Family A G protein-coupled receptor-like"/>
    <property type="match status" value="1"/>
</dbReference>
<dbReference type="PROSITE" id="PS00237">
    <property type="entry name" value="G_PROTEIN_RECEP_F1_1"/>
    <property type="match status" value="1"/>
</dbReference>
<dbReference type="PROSITE" id="PS50262">
    <property type="entry name" value="G_PROTEIN_RECEP_F1_2"/>
    <property type="match status" value="1"/>
</dbReference>
<name>O5P80_MOUSE</name>
<reference key="1">
    <citation type="journal article" date="2002" name="Nat. Neurosci.">
        <title>The olfactory receptor gene superfamily of the mouse.</title>
        <authorList>
            <person name="Zhang X."/>
            <person name="Firestein S."/>
        </authorList>
    </citation>
    <scope>NUCLEOTIDE SEQUENCE [GENOMIC DNA]</scope>
</reference>
<reference key="2">
    <citation type="journal article" date="2002" name="Hum. Mol. Genet.">
        <title>Different evolutionary processes shaped the mouse and human olfactory receptor gene families.</title>
        <authorList>
            <person name="Young J.M."/>
            <person name="Friedman C."/>
            <person name="Williams E.M."/>
            <person name="Ross J.A."/>
            <person name="Tonnes-Priddy L."/>
            <person name="Trask B.J."/>
        </authorList>
    </citation>
    <scope>NUCLEOTIDE SEQUENCE [GENOMIC DNA]</scope>
</reference>
<reference key="3">
    <citation type="journal article" date="2002" name="Hum. Mol. Genet.">
        <authorList>
            <person name="Young J.M."/>
            <person name="Friedman C."/>
            <person name="Williams E.M."/>
            <person name="Ross J.A."/>
            <person name="Tonnes-Priddy L."/>
            <person name="Trask B.J."/>
        </authorList>
    </citation>
    <scope>ERRATUM OF PUBMED:11875048</scope>
</reference>
<gene>
    <name evidence="4" type="primary">Or5p80</name>
    <name evidence="4" type="synonym">Mor204-6</name>
    <name evidence="4" type="synonym">Olfr508</name>
</gene>
<organism>
    <name type="scientific">Mus musculus</name>
    <name type="common">Mouse</name>
    <dbReference type="NCBI Taxonomy" id="10090"/>
    <lineage>
        <taxon>Eukaryota</taxon>
        <taxon>Metazoa</taxon>
        <taxon>Chordata</taxon>
        <taxon>Craniata</taxon>
        <taxon>Vertebrata</taxon>
        <taxon>Euteleostomi</taxon>
        <taxon>Mammalia</taxon>
        <taxon>Eutheria</taxon>
        <taxon>Euarchontoglires</taxon>
        <taxon>Glires</taxon>
        <taxon>Rodentia</taxon>
        <taxon>Myomorpha</taxon>
        <taxon>Muroidea</taxon>
        <taxon>Muridae</taxon>
        <taxon>Murinae</taxon>
        <taxon>Mus</taxon>
        <taxon>Mus</taxon>
    </lineage>
</organism>
<sequence length="310" mass="34360">MEPGNYTVVTEVILLGFTEDAIIRAILFIVFLIIYSVTLMGNASIIMLIRRSPQLHTPMYLLLSHLAFVDIGYSSSVTPIMLKGFLRKETFILVSGCVAQLCSVVTFGSTECFLLAAMAYDRYVAICSPLLYATQMSSTVCILLVGASYLGGCVNAWTFTGCLLNLSFCRPNKVNHFFCDYSPLLKISCSHDFSSEVIPAISSGSIIVVTVFIIALSYVYILVSILKMRSTEGRQKAFSTCTSHLTAVTLFYGTITFIYVMPKSSYSTDQNKVVSVFYTVVIPMLNPIIYSLRNKDVKEAMKKLMANTHH</sequence>
<evidence type="ECO:0000255" key="1"/>
<evidence type="ECO:0000255" key="2">
    <source>
        <dbReference type="PROSITE-ProRule" id="PRU00521"/>
    </source>
</evidence>
<evidence type="ECO:0000305" key="3"/>
<evidence type="ECO:0000312" key="4">
    <source>
        <dbReference type="MGI" id="MGI:3030342"/>
    </source>
</evidence>
<feature type="chain" id="PRO_0000150855" description="Olfactory receptor 5P80">
    <location>
        <begin position="1"/>
        <end position="310"/>
    </location>
</feature>
<feature type="topological domain" description="Extracellular" evidence="1">
    <location>
        <begin position="1"/>
        <end position="25"/>
    </location>
</feature>
<feature type="transmembrane region" description="Helical; Name=1" evidence="1">
    <location>
        <begin position="26"/>
        <end position="46"/>
    </location>
</feature>
<feature type="topological domain" description="Cytoplasmic" evidence="1">
    <location>
        <begin position="47"/>
        <end position="54"/>
    </location>
</feature>
<feature type="transmembrane region" description="Helical; Name=2" evidence="1">
    <location>
        <begin position="55"/>
        <end position="75"/>
    </location>
</feature>
<feature type="topological domain" description="Extracellular" evidence="1">
    <location>
        <begin position="76"/>
        <end position="99"/>
    </location>
</feature>
<feature type="transmembrane region" description="Helical; Name=3" evidence="1">
    <location>
        <begin position="100"/>
        <end position="120"/>
    </location>
</feature>
<feature type="topological domain" description="Cytoplasmic" evidence="1">
    <location>
        <begin position="121"/>
        <end position="133"/>
    </location>
</feature>
<feature type="transmembrane region" description="Helical; Name=4" evidence="1">
    <location>
        <begin position="134"/>
        <end position="154"/>
    </location>
</feature>
<feature type="topological domain" description="Extracellular" evidence="1">
    <location>
        <begin position="155"/>
        <end position="196"/>
    </location>
</feature>
<feature type="transmembrane region" description="Helical; Name=5" evidence="1">
    <location>
        <begin position="197"/>
        <end position="217"/>
    </location>
</feature>
<feature type="topological domain" description="Cytoplasmic" evidence="1">
    <location>
        <begin position="218"/>
        <end position="237"/>
    </location>
</feature>
<feature type="transmembrane region" description="Helical; Name=6" evidence="1">
    <location>
        <begin position="238"/>
        <end position="258"/>
    </location>
</feature>
<feature type="topological domain" description="Extracellular" evidence="1">
    <location>
        <begin position="259"/>
        <end position="271"/>
    </location>
</feature>
<feature type="transmembrane region" description="Helical; Name=7" evidence="1">
    <location>
        <begin position="272"/>
        <end position="292"/>
    </location>
</feature>
<feature type="topological domain" description="Cytoplasmic" evidence="1">
    <location>
        <begin position="293"/>
        <end position="310"/>
    </location>
</feature>
<feature type="glycosylation site" description="N-linked (GlcNAc...) asparagine" evidence="1">
    <location>
        <position position="5"/>
    </location>
</feature>
<feature type="glycosylation site" description="N-linked (GlcNAc...) asparagine" evidence="1">
    <location>
        <position position="165"/>
    </location>
</feature>
<feature type="disulfide bond" evidence="2">
    <location>
        <begin position="97"/>
        <end position="189"/>
    </location>
</feature>
<keyword id="KW-1003">Cell membrane</keyword>
<keyword id="KW-1015">Disulfide bond</keyword>
<keyword id="KW-0297">G-protein coupled receptor</keyword>
<keyword id="KW-0325">Glycoprotein</keyword>
<keyword id="KW-0472">Membrane</keyword>
<keyword id="KW-0552">Olfaction</keyword>
<keyword id="KW-0675">Receptor</keyword>
<keyword id="KW-1185">Reference proteome</keyword>
<keyword id="KW-0716">Sensory transduction</keyword>
<keyword id="KW-0807">Transducer</keyword>
<keyword id="KW-0812">Transmembrane</keyword>
<keyword id="KW-1133">Transmembrane helix</keyword>
<accession>Q8VG42</accession>
<proteinExistence type="inferred from homology"/>
<comment type="function">
    <text>Potential odorant receptor.</text>
</comment>
<comment type="subcellular location">
    <subcellularLocation>
        <location evidence="3">Cell membrane</location>
        <topology evidence="1">Multi-pass membrane protein</topology>
    </subcellularLocation>
</comment>
<comment type="similarity">
    <text evidence="2">Belongs to the G-protein coupled receptor 1 family.</text>
</comment>